<keyword id="KW-0963">Cytoplasm</keyword>
<keyword id="KW-0489">Methyltransferase</keyword>
<keyword id="KW-1185">Reference proteome</keyword>
<keyword id="KW-0949">S-adenosyl-L-methionine</keyword>
<keyword id="KW-0808">Transferase</keyword>
<proteinExistence type="inferred from homology"/>
<evidence type="ECO:0000255" key="1">
    <source>
        <dbReference type="HAMAP-Rule" id="MF_00090"/>
    </source>
</evidence>
<evidence type="ECO:0000256" key="2">
    <source>
        <dbReference type="SAM" id="MobiDB-lite"/>
    </source>
</evidence>
<sequence>MVAVSLKMSQPAAPPPPMGERARTRMLLALQSRGIHDPRVLEVMGALPRHDFVDEALAGHAYGDATLPIGEGQTLSQPYTVARMSQALELGYGMHVLEIGTGSGYQTAVLAALCRRVYTVERIPSLALLARERLERMGITNVRYRVGDGTLGWPEPRPFERIIVTAGAPATPERLKRQLEIGGRMIIPEGGKLNQQLICIQRTGPESWQRDVLEACRFVPLVGQQGWE</sequence>
<reference key="1">
    <citation type="journal article" date="2009" name="Appl. Environ. Microbiol.">
        <title>Complete genome sequence of the chemolithoautotrophic marine magnetotactic coccus strain MC-1.</title>
        <authorList>
            <person name="Schubbe S."/>
            <person name="Williams T.J."/>
            <person name="Xie G."/>
            <person name="Kiss H.E."/>
            <person name="Brettin T.S."/>
            <person name="Martinez D."/>
            <person name="Ross C.A."/>
            <person name="Schuler D."/>
            <person name="Cox B.L."/>
            <person name="Nealson K.H."/>
            <person name="Bazylinski D.A."/>
        </authorList>
    </citation>
    <scope>NUCLEOTIDE SEQUENCE [LARGE SCALE GENOMIC DNA]</scope>
    <source>
        <strain>ATCC BAA-1437 / JCM 17883 / MC-1</strain>
    </source>
</reference>
<organism>
    <name type="scientific">Magnetococcus marinus (strain ATCC BAA-1437 / JCM 17883 / MC-1)</name>
    <dbReference type="NCBI Taxonomy" id="156889"/>
    <lineage>
        <taxon>Bacteria</taxon>
        <taxon>Pseudomonadati</taxon>
        <taxon>Pseudomonadota</taxon>
        <taxon>Alphaproteobacteria</taxon>
        <taxon>Magnetococcales</taxon>
        <taxon>Magnetococcaceae</taxon>
        <taxon>Magnetococcus</taxon>
    </lineage>
</organism>
<accession>A0L4K5</accession>
<gene>
    <name evidence="1" type="primary">pcm</name>
    <name type="ordered locus">Mmc1_0372</name>
</gene>
<feature type="chain" id="PRO_0000351873" description="Protein-L-isoaspartate O-methyltransferase">
    <location>
        <begin position="1"/>
        <end position="228"/>
    </location>
</feature>
<feature type="region of interest" description="Disordered" evidence="2">
    <location>
        <begin position="1"/>
        <end position="20"/>
    </location>
</feature>
<feature type="active site" evidence="1">
    <location>
        <position position="76"/>
    </location>
</feature>
<comment type="function">
    <text evidence="1">Catalyzes the methyl esterification of L-isoaspartyl residues in peptides and proteins that result from spontaneous decomposition of normal L-aspartyl and L-asparaginyl residues. It plays a role in the repair and/or degradation of damaged proteins.</text>
</comment>
<comment type="catalytic activity">
    <reaction evidence="1">
        <text>[protein]-L-isoaspartate + S-adenosyl-L-methionine = [protein]-L-isoaspartate alpha-methyl ester + S-adenosyl-L-homocysteine</text>
        <dbReference type="Rhea" id="RHEA:12705"/>
        <dbReference type="Rhea" id="RHEA-COMP:12143"/>
        <dbReference type="Rhea" id="RHEA-COMP:12144"/>
        <dbReference type="ChEBI" id="CHEBI:57856"/>
        <dbReference type="ChEBI" id="CHEBI:59789"/>
        <dbReference type="ChEBI" id="CHEBI:90596"/>
        <dbReference type="ChEBI" id="CHEBI:90598"/>
        <dbReference type="EC" id="2.1.1.77"/>
    </reaction>
</comment>
<comment type="subcellular location">
    <subcellularLocation>
        <location evidence="1">Cytoplasm</location>
    </subcellularLocation>
</comment>
<comment type="similarity">
    <text evidence="1">Belongs to the methyltransferase superfamily. L-isoaspartyl/D-aspartyl protein methyltransferase family.</text>
</comment>
<protein>
    <recommendedName>
        <fullName evidence="1">Protein-L-isoaspartate O-methyltransferase</fullName>
        <ecNumber evidence="1">2.1.1.77</ecNumber>
    </recommendedName>
    <alternativeName>
        <fullName evidence="1">L-isoaspartyl protein carboxyl methyltransferase</fullName>
    </alternativeName>
    <alternativeName>
        <fullName evidence="1">Protein L-isoaspartyl methyltransferase</fullName>
    </alternativeName>
    <alternativeName>
        <fullName evidence="1">Protein-beta-aspartate methyltransferase</fullName>
        <shortName evidence="1">PIMT</shortName>
    </alternativeName>
</protein>
<name>PIMT_MAGMM</name>
<dbReference type="EC" id="2.1.1.77" evidence="1"/>
<dbReference type="EMBL" id="CP000471">
    <property type="protein sequence ID" value="ABK42898.1"/>
    <property type="molecule type" value="Genomic_DNA"/>
</dbReference>
<dbReference type="SMR" id="A0L4K5"/>
<dbReference type="STRING" id="156889.Mmc1_0372"/>
<dbReference type="KEGG" id="mgm:Mmc1_0372"/>
<dbReference type="eggNOG" id="COG2518">
    <property type="taxonomic scope" value="Bacteria"/>
</dbReference>
<dbReference type="HOGENOM" id="CLU_055432_2_0_5"/>
<dbReference type="OrthoDB" id="9810066at2"/>
<dbReference type="Proteomes" id="UP000002586">
    <property type="component" value="Chromosome"/>
</dbReference>
<dbReference type="GO" id="GO:0005737">
    <property type="term" value="C:cytoplasm"/>
    <property type="evidence" value="ECO:0007669"/>
    <property type="project" value="UniProtKB-SubCell"/>
</dbReference>
<dbReference type="GO" id="GO:0004719">
    <property type="term" value="F:protein-L-isoaspartate (D-aspartate) O-methyltransferase activity"/>
    <property type="evidence" value="ECO:0007669"/>
    <property type="project" value="UniProtKB-UniRule"/>
</dbReference>
<dbReference type="GO" id="GO:0032259">
    <property type="term" value="P:methylation"/>
    <property type="evidence" value="ECO:0007669"/>
    <property type="project" value="UniProtKB-KW"/>
</dbReference>
<dbReference type="GO" id="GO:0036211">
    <property type="term" value="P:protein modification process"/>
    <property type="evidence" value="ECO:0007669"/>
    <property type="project" value="UniProtKB-UniRule"/>
</dbReference>
<dbReference type="GO" id="GO:0030091">
    <property type="term" value="P:protein repair"/>
    <property type="evidence" value="ECO:0007669"/>
    <property type="project" value="UniProtKB-UniRule"/>
</dbReference>
<dbReference type="CDD" id="cd02440">
    <property type="entry name" value="AdoMet_MTases"/>
    <property type="match status" value="1"/>
</dbReference>
<dbReference type="FunFam" id="3.40.50.150:FF:000010">
    <property type="entry name" value="Protein-L-isoaspartate O-methyltransferase"/>
    <property type="match status" value="1"/>
</dbReference>
<dbReference type="Gene3D" id="3.40.50.150">
    <property type="entry name" value="Vaccinia Virus protein VP39"/>
    <property type="match status" value="1"/>
</dbReference>
<dbReference type="HAMAP" id="MF_00090">
    <property type="entry name" value="PIMT"/>
    <property type="match status" value="1"/>
</dbReference>
<dbReference type="InterPro" id="IPR000682">
    <property type="entry name" value="PCMT"/>
</dbReference>
<dbReference type="InterPro" id="IPR029063">
    <property type="entry name" value="SAM-dependent_MTases_sf"/>
</dbReference>
<dbReference type="NCBIfam" id="TIGR00080">
    <property type="entry name" value="pimt"/>
    <property type="match status" value="1"/>
</dbReference>
<dbReference type="NCBIfam" id="NF001453">
    <property type="entry name" value="PRK00312.1"/>
    <property type="match status" value="1"/>
</dbReference>
<dbReference type="PANTHER" id="PTHR11579">
    <property type="entry name" value="PROTEIN-L-ISOASPARTATE O-METHYLTRANSFERASE"/>
    <property type="match status" value="1"/>
</dbReference>
<dbReference type="PANTHER" id="PTHR11579:SF0">
    <property type="entry name" value="PROTEIN-L-ISOASPARTATE(D-ASPARTATE) O-METHYLTRANSFERASE"/>
    <property type="match status" value="1"/>
</dbReference>
<dbReference type="Pfam" id="PF01135">
    <property type="entry name" value="PCMT"/>
    <property type="match status" value="1"/>
</dbReference>
<dbReference type="SUPFAM" id="SSF53335">
    <property type="entry name" value="S-adenosyl-L-methionine-dependent methyltransferases"/>
    <property type="match status" value="1"/>
</dbReference>